<name>S2542_MOUSE</name>
<dbReference type="EMBL" id="BC025937">
    <property type="protein sequence ID" value="AAH25937.1"/>
    <property type="molecule type" value="mRNA"/>
</dbReference>
<dbReference type="EMBL" id="BC036140">
    <property type="protein sequence ID" value="AAH36140.1"/>
    <property type="molecule type" value="mRNA"/>
</dbReference>
<dbReference type="CCDS" id="CCDS40370.1"/>
<dbReference type="RefSeq" id="NP_001007571.1">
    <property type="nucleotide sequence ID" value="NM_001007570.2"/>
</dbReference>
<dbReference type="SMR" id="Q8R0Y8"/>
<dbReference type="BioGRID" id="215767">
    <property type="interactions" value="3"/>
</dbReference>
<dbReference type="FunCoup" id="Q8R0Y8">
    <property type="interactions" value="1167"/>
</dbReference>
<dbReference type="IntAct" id="Q8R0Y8">
    <property type="interactions" value="1"/>
</dbReference>
<dbReference type="STRING" id="10090.ENSMUSP00000105754"/>
<dbReference type="GlyGen" id="Q8R0Y8">
    <property type="glycosylation" value="2 sites, 1 O-linked glycan (1 site)"/>
</dbReference>
<dbReference type="iPTMnet" id="Q8R0Y8"/>
<dbReference type="PhosphoSitePlus" id="Q8R0Y8"/>
<dbReference type="SwissPalm" id="Q8R0Y8"/>
<dbReference type="jPOST" id="Q8R0Y8"/>
<dbReference type="PaxDb" id="10090-ENSMUSP00000105754"/>
<dbReference type="PeptideAtlas" id="Q8R0Y8"/>
<dbReference type="ProteomicsDB" id="256866"/>
<dbReference type="Pumba" id="Q8R0Y8"/>
<dbReference type="Antibodypedia" id="28336">
    <property type="antibodies" value="38 antibodies from 15 providers"/>
</dbReference>
<dbReference type="DNASU" id="73095"/>
<dbReference type="Ensembl" id="ENSMUST00000110127.8">
    <property type="protein sequence ID" value="ENSMUSP00000105754.2"/>
    <property type="gene ID" value="ENSMUSG00000002346.18"/>
</dbReference>
<dbReference type="GeneID" id="73095"/>
<dbReference type="KEGG" id="mmu:73095"/>
<dbReference type="UCSC" id="uc009lzg.2">
    <property type="organism name" value="mouse"/>
</dbReference>
<dbReference type="AGR" id="MGI:1920345"/>
<dbReference type="CTD" id="284439"/>
<dbReference type="MGI" id="MGI:1920345">
    <property type="gene designation" value="Slc25a42"/>
</dbReference>
<dbReference type="VEuPathDB" id="HostDB:ENSMUSG00000002346"/>
<dbReference type="eggNOG" id="KOG0752">
    <property type="taxonomic scope" value="Eukaryota"/>
</dbReference>
<dbReference type="GeneTree" id="ENSGT00940000158163"/>
<dbReference type="HOGENOM" id="CLU_015166_10_1_1"/>
<dbReference type="InParanoid" id="Q8R0Y8"/>
<dbReference type="OMA" id="VYERMKW"/>
<dbReference type="OrthoDB" id="270584at2759"/>
<dbReference type="PhylomeDB" id="Q8R0Y8"/>
<dbReference type="TreeFam" id="TF314806"/>
<dbReference type="Reactome" id="R-MMU-199220">
    <property type="pathway name" value="Vitamin B5 (pantothenate) metabolism"/>
</dbReference>
<dbReference type="BioGRID-ORCS" id="73095">
    <property type="hits" value="5 hits in 77 CRISPR screens"/>
</dbReference>
<dbReference type="ChiTaRS" id="Slc25a42">
    <property type="organism name" value="mouse"/>
</dbReference>
<dbReference type="PRO" id="PR:Q8R0Y8"/>
<dbReference type="Proteomes" id="UP000000589">
    <property type="component" value="Chromosome 8"/>
</dbReference>
<dbReference type="RNAct" id="Q8R0Y8">
    <property type="molecule type" value="protein"/>
</dbReference>
<dbReference type="Bgee" id="ENSMUSG00000002346">
    <property type="expression patterns" value="Expressed in interventricular septum and 177 other cell types or tissues"/>
</dbReference>
<dbReference type="GO" id="GO:0005743">
    <property type="term" value="C:mitochondrial inner membrane"/>
    <property type="evidence" value="ECO:0007005"/>
    <property type="project" value="MGI"/>
</dbReference>
<dbReference type="GO" id="GO:0005739">
    <property type="term" value="C:mitochondrion"/>
    <property type="evidence" value="ECO:0007005"/>
    <property type="project" value="MGI"/>
</dbReference>
<dbReference type="GO" id="GO:0043262">
    <property type="term" value="F:ADP phosphatase activity"/>
    <property type="evidence" value="ECO:0000250"/>
    <property type="project" value="UniProtKB"/>
</dbReference>
<dbReference type="GO" id="GO:0015217">
    <property type="term" value="F:ADP transmembrane transporter activity"/>
    <property type="evidence" value="ECO:0000250"/>
    <property type="project" value="UniProtKB"/>
</dbReference>
<dbReference type="GO" id="GO:0080122">
    <property type="term" value="F:AMP transmembrane transporter activity"/>
    <property type="evidence" value="ECO:0000250"/>
    <property type="project" value="UniProtKB"/>
</dbReference>
<dbReference type="GO" id="GO:0005347">
    <property type="term" value="F:ATP transmembrane transporter activity"/>
    <property type="evidence" value="ECO:0000250"/>
    <property type="project" value="UniProtKB"/>
</dbReference>
<dbReference type="GO" id="GO:0015228">
    <property type="term" value="F:coenzyme A transmembrane transporter activity"/>
    <property type="evidence" value="ECO:0000250"/>
    <property type="project" value="UniProtKB"/>
</dbReference>
<dbReference type="GO" id="GO:0015291">
    <property type="term" value="F:secondary active transmembrane transporter activity"/>
    <property type="evidence" value="ECO:0000266"/>
    <property type="project" value="MGI"/>
</dbReference>
<dbReference type="GO" id="GO:0015866">
    <property type="term" value="P:ADP transport"/>
    <property type="evidence" value="ECO:0000250"/>
    <property type="project" value="UniProtKB"/>
</dbReference>
<dbReference type="GO" id="GO:0080121">
    <property type="term" value="P:AMP transport"/>
    <property type="evidence" value="ECO:0000250"/>
    <property type="project" value="UniProtKB"/>
</dbReference>
<dbReference type="GO" id="GO:0015867">
    <property type="term" value="P:ATP transport"/>
    <property type="evidence" value="ECO:0000250"/>
    <property type="project" value="UniProtKB"/>
</dbReference>
<dbReference type="GO" id="GO:0015937">
    <property type="term" value="P:coenzyme A biosynthetic process"/>
    <property type="evidence" value="ECO:0000266"/>
    <property type="project" value="MGI"/>
</dbReference>
<dbReference type="GO" id="GO:0035349">
    <property type="term" value="P:coenzyme A transmembrane transport"/>
    <property type="evidence" value="ECO:0000250"/>
    <property type="project" value="UniProtKB"/>
</dbReference>
<dbReference type="FunFam" id="1.50.40.10:FF:000014">
    <property type="entry name" value="mitochondrial coenzyme A transporter SLC25A42"/>
    <property type="match status" value="1"/>
</dbReference>
<dbReference type="Gene3D" id="1.50.40.10">
    <property type="entry name" value="Mitochondrial carrier domain"/>
    <property type="match status" value="1"/>
</dbReference>
<dbReference type="InterPro" id="IPR014762">
    <property type="entry name" value="DNA_mismatch_repair_CS"/>
</dbReference>
<dbReference type="InterPro" id="IPR002167">
    <property type="entry name" value="GDC-like"/>
</dbReference>
<dbReference type="InterPro" id="IPR002067">
    <property type="entry name" value="Mit_carrier"/>
</dbReference>
<dbReference type="InterPro" id="IPR018108">
    <property type="entry name" value="Mitochondrial_sb/sol_carrier"/>
</dbReference>
<dbReference type="InterPro" id="IPR023395">
    <property type="entry name" value="Mt_carrier_dom_sf"/>
</dbReference>
<dbReference type="PANTHER" id="PTHR24089">
    <property type="entry name" value="SOLUTE CARRIER FAMILY 25"/>
    <property type="match status" value="1"/>
</dbReference>
<dbReference type="Pfam" id="PF00153">
    <property type="entry name" value="Mito_carr"/>
    <property type="match status" value="3"/>
</dbReference>
<dbReference type="PRINTS" id="PR00928">
    <property type="entry name" value="GRAVESDC"/>
</dbReference>
<dbReference type="PRINTS" id="PR00926">
    <property type="entry name" value="MITOCARRIER"/>
</dbReference>
<dbReference type="SUPFAM" id="SSF103506">
    <property type="entry name" value="Mitochondrial carrier"/>
    <property type="match status" value="1"/>
</dbReference>
<dbReference type="PROSITE" id="PS50920">
    <property type="entry name" value="SOLCAR"/>
    <property type="match status" value="3"/>
</dbReference>
<sequence length="318" mass="35241">MGNGVQEGSVRLREDAEAVLAGAVSSKRDHRQVLSSLLSGALAGALAKTAVAPLDRTKIIFQVSSKRFSAKEAFRLLYFTYLNEGFLSLWRGNSATMVRVIPYAAIQFSAHEEYKRILGHYYGFRGEALPPWPRLLAGALAGTTAASLTYPLDLVRARMAVTPKEMYSNIFHVFIRISREEGLKTLYFGFTPTVLGVIPYAGLSFFTYESLKSLHREYSGRPQPYPFERMVFGACAGLIGQSASYPLDVVRRRMQTAGVTGHQHGSILSTLRSIVREEGAVRGLYKGLSMNWLKGPIAVGISFTTFDLMQILLRRLQS</sequence>
<comment type="function">
    <text evidence="1">Mitochondrial carrier mediating the transport of coenzyme A (CoA) in mitochondria in exchange for intramitochondrial (deoxy)adenine nucleotides and adenosine 3',5'-diphosphate.</text>
</comment>
<comment type="catalytic activity">
    <reaction evidence="1">
        <text>ADP(out) + CoA(in) = ADP(in) + CoA(out)</text>
        <dbReference type="Rhea" id="RHEA:72839"/>
        <dbReference type="ChEBI" id="CHEBI:57287"/>
        <dbReference type="ChEBI" id="CHEBI:456216"/>
    </reaction>
</comment>
<comment type="catalytic activity">
    <reaction evidence="1">
        <text>3'-dephospho-CoA(in) + ADP(out) = 3'-dephospho-CoA(out) + ADP(in)</text>
        <dbReference type="Rhea" id="RHEA:72843"/>
        <dbReference type="ChEBI" id="CHEBI:57328"/>
        <dbReference type="ChEBI" id="CHEBI:456216"/>
    </reaction>
</comment>
<comment type="catalytic activity">
    <reaction evidence="1">
        <text>adenosine 3',5'-bisphosphate(in) + ADP(out) = adenosine 3',5'-bisphosphate(out) + ADP(in)</text>
        <dbReference type="Rhea" id="RHEA:72847"/>
        <dbReference type="ChEBI" id="CHEBI:58343"/>
        <dbReference type="ChEBI" id="CHEBI:456216"/>
    </reaction>
</comment>
<comment type="catalytic activity">
    <reaction evidence="1">
        <text>AMP(in) + ADP(out) = AMP(out) + ADP(in)</text>
        <dbReference type="Rhea" id="RHEA:72851"/>
        <dbReference type="ChEBI" id="CHEBI:456215"/>
        <dbReference type="ChEBI" id="CHEBI:456216"/>
    </reaction>
</comment>
<comment type="catalytic activity">
    <reaction evidence="1">
        <text>dADP(in) + ADP(out) = dADP(out) + ADP(in)</text>
        <dbReference type="Rhea" id="RHEA:72855"/>
        <dbReference type="ChEBI" id="CHEBI:57667"/>
        <dbReference type="ChEBI" id="CHEBI:456216"/>
    </reaction>
</comment>
<comment type="catalytic activity">
    <reaction evidence="1">
        <text>ADP(in) + ATP(out) = ADP(out) + ATP(in)</text>
        <dbReference type="Rhea" id="RHEA:34999"/>
        <dbReference type="ChEBI" id="CHEBI:30616"/>
        <dbReference type="ChEBI" id="CHEBI:456216"/>
    </reaction>
</comment>
<comment type="subcellular location">
    <subcellularLocation>
        <location evidence="1">Mitochondrion inner membrane</location>
        <topology evidence="2">Multi-pass membrane protein</topology>
    </subcellularLocation>
</comment>
<comment type="similarity">
    <text evidence="3">Belongs to the mitochondrial carrier (TC 2.A.29) family.</text>
</comment>
<reference key="1">
    <citation type="journal article" date="2004" name="Genome Res.">
        <title>The status, quality, and expansion of the NIH full-length cDNA project: the Mammalian Gene Collection (MGC).</title>
        <authorList>
            <consortium name="The MGC Project Team"/>
        </authorList>
    </citation>
    <scope>NUCLEOTIDE SEQUENCE [LARGE SCALE MRNA]</scope>
    <source>
        <strain>FVB/N</strain>
        <tissue>Kidney</tissue>
        <tissue>Liver</tissue>
    </source>
</reference>
<reference key="2">
    <citation type="journal article" date="2010" name="Cell">
        <title>A tissue-specific atlas of mouse protein phosphorylation and expression.</title>
        <authorList>
            <person name="Huttlin E.L."/>
            <person name="Jedrychowski M.P."/>
            <person name="Elias J.E."/>
            <person name="Goswami T."/>
            <person name="Rad R."/>
            <person name="Beausoleil S.A."/>
            <person name="Villen J."/>
            <person name="Haas W."/>
            <person name="Sowa M.E."/>
            <person name="Gygi S.P."/>
        </authorList>
    </citation>
    <scope>IDENTIFICATION BY MASS SPECTROMETRY [LARGE SCALE ANALYSIS]</scope>
    <source>
        <tissue>Brain</tissue>
        <tissue>Brown adipose tissue</tissue>
        <tissue>Heart</tissue>
        <tissue>Kidney</tissue>
        <tissue>Liver</tissue>
        <tissue>Lung</tissue>
        <tissue>Pancreas</tissue>
        <tissue>Spleen</tissue>
        <tissue>Testis</tissue>
    </source>
</reference>
<gene>
    <name type="primary">Slc25a42</name>
</gene>
<organism>
    <name type="scientific">Mus musculus</name>
    <name type="common">Mouse</name>
    <dbReference type="NCBI Taxonomy" id="10090"/>
    <lineage>
        <taxon>Eukaryota</taxon>
        <taxon>Metazoa</taxon>
        <taxon>Chordata</taxon>
        <taxon>Craniata</taxon>
        <taxon>Vertebrata</taxon>
        <taxon>Euteleostomi</taxon>
        <taxon>Mammalia</taxon>
        <taxon>Eutheria</taxon>
        <taxon>Euarchontoglires</taxon>
        <taxon>Glires</taxon>
        <taxon>Rodentia</taxon>
        <taxon>Myomorpha</taxon>
        <taxon>Muroidea</taxon>
        <taxon>Muridae</taxon>
        <taxon>Murinae</taxon>
        <taxon>Mus</taxon>
        <taxon>Mus</taxon>
    </lineage>
</organism>
<accession>Q8R0Y8</accession>
<protein>
    <recommendedName>
        <fullName>Mitochondrial coenzyme A transporter SLC25A42</fullName>
    </recommendedName>
    <alternativeName>
        <fullName>Solute carrier family 25 member 42</fullName>
    </alternativeName>
</protein>
<feature type="chain" id="PRO_0000291818" description="Mitochondrial coenzyme A transporter SLC25A42">
    <location>
        <begin position="1"/>
        <end position="318"/>
    </location>
</feature>
<feature type="transmembrane region" description="Helical; Name=1" evidence="2">
    <location>
        <begin position="33"/>
        <end position="53"/>
    </location>
</feature>
<feature type="transmembrane region" description="Helical; Name=2" evidence="2">
    <location>
        <begin position="89"/>
        <end position="109"/>
    </location>
</feature>
<feature type="transmembrane region" description="Helical; Name=3" evidence="2">
    <location>
        <begin position="135"/>
        <end position="155"/>
    </location>
</feature>
<feature type="transmembrane region" description="Helical; Name=4" evidence="2">
    <location>
        <begin position="186"/>
        <end position="206"/>
    </location>
</feature>
<feature type="transmembrane region" description="Helical; Name=5" evidence="2">
    <location>
        <begin position="230"/>
        <end position="250"/>
    </location>
</feature>
<feature type="transmembrane region" description="Helical; Name=6" evidence="2">
    <location>
        <begin position="293"/>
        <end position="313"/>
    </location>
</feature>
<feature type="repeat" description="Solcar 1">
    <location>
        <begin position="31"/>
        <end position="117"/>
    </location>
</feature>
<feature type="repeat" description="Solcar 2">
    <location>
        <begin position="129"/>
        <end position="214"/>
    </location>
</feature>
<feature type="repeat" description="Solcar 3">
    <location>
        <begin position="224"/>
        <end position="312"/>
    </location>
</feature>
<evidence type="ECO:0000250" key="1">
    <source>
        <dbReference type="UniProtKB" id="Q86VD7"/>
    </source>
</evidence>
<evidence type="ECO:0000255" key="2"/>
<evidence type="ECO:0000305" key="3"/>
<proteinExistence type="evidence at protein level"/>
<keyword id="KW-0472">Membrane</keyword>
<keyword id="KW-0496">Mitochondrion</keyword>
<keyword id="KW-0999">Mitochondrion inner membrane</keyword>
<keyword id="KW-1185">Reference proteome</keyword>
<keyword id="KW-0677">Repeat</keyword>
<keyword id="KW-0812">Transmembrane</keyword>
<keyword id="KW-1133">Transmembrane helix</keyword>
<keyword id="KW-0813">Transport</keyword>